<sequence>MFGLKQFYQSEVRTKLAQELDIKNPMLLPKLEKIVISVGAGAHAKDMKIMQNIAQTISLIAGQKAVITKAKKSVAGFKIREGMAVGAKVTLRNKRMYNFLEKLIVISLPRVKDFRGISRNGFDGCGNYTFGINEQLIFPEVVYDDIMVSHGMNITMVTSTDNDKEAFKLLELLGLPFAKVR</sequence>
<name>RL5_HELPY</name>
<organism>
    <name type="scientific">Helicobacter pylori (strain ATCC 700392 / 26695)</name>
    <name type="common">Campylobacter pylori</name>
    <dbReference type="NCBI Taxonomy" id="85962"/>
    <lineage>
        <taxon>Bacteria</taxon>
        <taxon>Pseudomonadati</taxon>
        <taxon>Campylobacterota</taxon>
        <taxon>Epsilonproteobacteria</taxon>
        <taxon>Campylobacterales</taxon>
        <taxon>Helicobacteraceae</taxon>
        <taxon>Helicobacter</taxon>
    </lineage>
</organism>
<comment type="function">
    <text evidence="1">This is one of the proteins that bind and probably mediate the attachment of the 5S RNA into the large ribosomal subunit, where it forms part of the central protuberance. In the 70S ribosome it contacts protein S13 of the 30S subunit (bridge B1b), connecting the 2 subunits; this bridge is implicated in subunit movement. Contacts the P site tRNA; the 5S rRNA and some of its associated proteins might help stabilize positioning of ribosome-bound tRNAs.</text>
</comment>
<comment type="subunit">
    <text evidence="1">Part of the 50S ribosomal subunit; part of the 5S rRNA/L5/L18/L25 subcomplex. Contacts the 5S rRNA and the P site tRNA. Forms a bridge to the 30S subunit in the 70S ribosome.</text>
</comment>
<comment type="similarity">
    <text evidence="1">Belongs to the universal ribosomal protein uL5 family.</text>
</comment>
<reference key="1">
    <citation type="journal article" date="1997" name="Nature">
        <title>The complete genome sequence of the gastric pathogen Helicobacter pylori.</title>
        <authorList>
            <person name="Tomb J.-F."/>
            <person name="White O."/>
            <person name="Kerlavage A.R."/>
            <person name="Clayton R.A."/>
            <person name="Sutton G.G."/>
            <person name="Fleischmann R.D."/>
            <person name="Ketchum K.A."/>
            <person name="Klenk H.-P."/>
            <person name="Gill S.R."/>
            <person name="Dougherty B.A."/>
            <person name="Nelson K.E."/>
            <person name="Quackenbush J."/>
            <person name="Zhou L."/>
            <person name="Kirkness E.F."/>
            <person name="Peterson S.N."/>
            <person name="Loftus B.J."/>
            <person name="Richardson D.L."/>
            <person name="Dodson R.J."/>
            <person name="Khalak H.G."/>
            <person name="Glodek A."/>
            <person name="McKenney K."/>
            <person name="FitzGerald L.M."/>
            <person name="Lee N."/>
            <person name="Adams M.D."/>
            <person name="Hickey E.K."/>
            <person name="Berg D.E."/>
            <person name="Gocayne J.D."/>
            <person name="Utterback T.R."/>
            <person name="Peterson J.D."/>
            <person name="Kelley J.M."/>
            <person name="Cotton M.D."/>
            <person name="Weidman J.F."/>
            <person name="Fujii C."/>
            <person name="Bowman C."/>
            <person name="Watthey L."/>
            <person name="Wallin E."/>
            <person name="Hayes W.S."/>
            <person name="Borodovsky M."/>
            <person name="Karp P.D."/>
            <person name="Smith H.O."/>
            <person name="Fraser C.M."/>
            <person name="Venter J.C."/>
        </authorList>
    </citation>
    <scope>NUCLEOTIDE SEQUENCE [LARGE SCALE GENOMIC DNA]</scope>
    <source>
        <strain>ATCC 700392 / 26695</strain>
    </source>
</reference>
<accession>P56033</accession>
<gene>
    <name evidence="1" type="primary">rplE</name>
    <name type="ordered locus">HP_1307</name>
</gene>
<dbReference type="EMBL" id="AE000511">
    <property type="protein sequence ID" value="AAD08347.1"/>
    <property type="molecule type" value="Genomic_DNA"/>
</dbReference>
<dbReference type="PIR" id="C64683">
    <property type="entry name" value="C64683"/>
</dbReference>
<dbReference type="RefSeq" id="NP_208099.1">
    <property type="nucleotide sequence ID" value="NC_000915.1"/>
</dbReference>
<dbReference type="RefSeq" id="WP_000467399.1">
    <property type="nucleotide sequence ID" value="NC_018939.1"/>
</dbReference>
<dbReference type="SMR" id="P56033"/>
<dbReference type="FunCoup" id="P56033">
    <property type="interactions" value="419"/>
</dbReference>
<dbReference type="IntAct" id="P56033">
    <property type="interactions" value="1"/>
</dbReference>
<dbReference type="STRING" id="85962.HP_1307"/>
<dbReference type="PaxDb" id="85962-C694_06750"/>
<dbReference type="EnsemblBacteria" id="AAD08347">
    <property type="protein sequence ID" value="AAD08347"/>
    <property type="gene ID" value="HP_1307"/>
</dbReference>
<dbReference type="KEGG" id="heo:C694_06750"/>
<dbReference type="KEGG" id="hpy:HP_1307"/>
<dbReference type="PATRIC" id="fig|85962.47.peg.1401"/>
<dbReference type="eggNOG" id="COG0094">
    <property type="taxonomic scope" value="Bacteria"/>
</dbReference>
<dbReference type="InParanoid" id="P56033"/>
<dbReference type="OrthoDB" id="9806626at2"/>
<dbReference type="PhylomeDB" id="P56033"/>
<dbReference type="Proteomes" id="UP000000429">
    <property type="component" value="Chromosome"/>
</dbReference>
<dbReference type="GO" id="GO:0022625">
    <property type="term" value="C:cytosolic large ribosomal subunit"/>
    <property type="evidence" value="ECO:0000318"/>
    <property type="project" value="GO_Central"/>
</dbReference>
<dbReference type="GO" id="GO:0003723">
    <property type="term" value="F:RNA binding"/>
    <property type="evidence" value="ECO:0000318"/>
    <property type="project" value="GO_Central"/>
</dbReference>
<dbReference type="GO" id="GO:0019843">
    <property type="term" value="F:rRNA binding"/>
    <property type="evidence" value="ECO:0007669"/>
    <property type="project" value="UniProtKB-UniRule"/>
</dbReference>
<dbReference type="GO" id="GO:0003735">
    <property type="term" value="F:structural constituent of ribosome"/>
    <property type="evidence" value="ECO:0000318"/>
    <property type="project" value="GO_Central"/>
</dbReference>
<dbReference type="GO" id="GO:0000049">
    <property type="term" value="F:tRNA binding"/>
    <property type="evidence" value="ECO:0007669"/>
    <property type="project" value="UniProtKB-UniRule"/>
</dbReference>
<dbReference type="GO" id="GO:0006412">
    <property type="term" value="P:translation"/>
    <property type="evidence" value="ECO:0000318"/>
    <property type="project" value="GO_Central"/>
</dbReference>
<dbReference type="FunFam" id="3.30.1440.10:FF:000001">
    <property type="entry name" value="50S ribosomal protein L5"/>
    <property type="match status" value="1"/>
</dbReference>
<dbReference type="Gene3D" id="3.30.1440.10">
    <property type="match status" value="1"/>
</dbReference>
<dbReference type="HAMAP" id="MF_01333_B">
    <property type="entry name" value="Ribosomal_uL5_B"/>
    <property type="match status" value="1"/>
</dbReference>
<dbReference type="InterPro" id="IPR002132">
    <property type="entry name" value="Ribosomal_uL5"/>
</dbReference>
<dbReference type="InterPro" id="IPR020930">
    <property type="entry name" value="Ribosomal_uL5_bac-type"/>
</dbReference>
<dbReference type="InterPro" id="IPR031309">
    <property type="entry name" value="Ribosomal_uL5_C"/>
</dbReference>
<dbReference type="InterPro" id="IPR020929">
    <property type="entry name" value="Ribosomal_uL5_CS"/>
</dbReference>
<dbReference type="InterPro" id="IPR022803">
    <property type="entry name" value="Ribosomal_uL5_dom_sf"/>
</dbReference>
<dbReference type="InterPro" id="IPR031310">
    <property type="entry name" value="Ribosomal_uL5_N"/>
</dbReference>
<dbReference type="NCBIfam" id="NF000585">
    <property type="entry name" value="PRK00010.1"/>
    <property type="match status" value="1"/>
</dbReference>
<dbReference type="PANTHER" id="PTHR11994">
    <property type="entry name" value="60S RIBOSOMAL PROTEIN L11-RELATED"/>
    <property type="match status" value="1"/>
</dbReference>
<dbReference type="Pfam" id="PF00281">
    <property type="entry name" value="Ribosomal_L5"/>
    <property type="match status" value="1"/>
</dbReference>
<dbReference type="Pfam" id="PF00673">
    <property type="entry name" value="Ribosomal_L5_C"/>
    <property type="match status" value="1"/>
</dbReference>
<dbReference type="PIRSF" id="PIRSF002161">
    <property type="entry name" value="Ribosomal_L5"/>
    <property type="match status" value="1"/>
</dbReference>
<dbReference type="SUPFAM" id="SSF55282">
    <property type="entry name" value="RL5-like"/>
    <property type="match status" value="1"/>
</dbReference>
<dbReference type="PROSITE" id="PS00358">
    <property type="entry name" value="RIBOSOMAL_L5"/>
    <property type="match status" value="1"/>
</dbReference>
<evidence type="ECO:0000255" key="1">
    <source>
        <dbReference type="HAMAP-Rule" id="MF_01333"/>
    </source>
</evidence>
<evidence type="ECO:0000305" key="2"/>
<keyword id="KW-1185">Reference proteome</keyword>
<keyword id="KW-0687">Ribonucleoprotein</keyword>
<keyword id="KW-0689">Ribosomal protein</keyword>
<keyword id="KW-0694">RNA-binding</keyword>
<keyword id="KW-0699">rRNA-binding</keyword>
<keyword id="KW-0820">tRNA-binding</keyword>
<proteinExistence type="inferred from homology"/>
<feature type="chain" id="PRO_0000124935" description="Large ribosomal subunit protein uL5">
    <location>
        <begin position="1"/>
        <end position="181"/>
    </location>
</feature>
<protein>
    <recommendedName>
        <fullName evidence="1">Large ribosomal subunit protein uL5</fullName>
    </recommendedName>
    <alternativeName>
        <fullName evidence="2">50S ribosomal protein L5</fullName>
    </alternativeName>
</protein>